<evidence type="ECO:0000255" key="1">
    <source>
        <dbReference type="PROSITE-ProRule" id="PRU00805"/>
    </source>
</evidence>
<evidence type="ECO:0000269" key="2">
    <source>
    </source>
</evidence>
<evidence type="ECO:0000269" key="3">
    <source>
    </source>
</evidence>
<evidence type="ECO:0000303" key="4">
    <source>
    </source>
</evidence>
<evidence type="ECO:0000305" key="5"/>
<evidence type="ECO:0000305" key="6">
    <source>
    </source>
</evidence>
<keyword id="KW-0017">Alkaloid metabolism</keyword>
<keyword id="KW-0223">Dioxygenase</keyword>
<keyword id="KW-0408">Iron</keyword>
<keyword id="KW-0479">Metal-binding</keyword>
<keyword id="KW-0560">Oxidoreductase</keyword>
<gene>
    <name evidence="4" type="primary">phqC</name>
</gene>
<feature type="chain" id="PRO_0000448867" description="2-oxoglutarate-dependent dioxygenase phqC">
    <location>
        <begin position="1"/>
        <end position="353"/>
    </location>
</feature>
<feature type="domain" description="Fe2OG dioxygenase" evidence="1">
    <location>
        <begin position="199"/>
        <end position="315"/>
    </location>
</feature>
<feature type="binding site" evidence="1">
    <location>
        <position position="227"/>
    </location>
    <ligand>
        <name>Fe cation</name>
        <dbReference type="ChEBI" id="CHEBI:24875"/>
    </ligand>
</feature>
<feature type="binding site" evidence="1">
    <location>
        <position position="229"/>
    </location>
    <ligand>
        <name>Fe cation</name>
        <dbReference type="ChEBI" id="CHEBI:24875"/>
    </ligand>
</feature>
<feature type="binding site" evidence="1">
    <location>
        <position position="287"/>
    </location>
    <ligand>
        <name>Fe cation</name>
        <dbReference type="ChEBI" id="CHEBI:24875"/>
    </ligand>
</feature>
<feature type="binding site" evidence="1">
    <location>
        <position position="302"/>
    </location>
    <ligand>
        <name>2-oxoglutarate</name>
        <dbReference type="ChEBI" id="CHEBI:16810"/>
    </ligand>
</feature>
<proteinExistence type="inferred from homology"/>
<accession>L0E2Q1</accession>
<dbReference type="EC" id="1.14.11.-" evidence="1"/>
<dbReference type="EMBL" id="JQ708195">
    <property type="protein sequence ID" value="AGA37270.1"/>
    <property type="molecule type" value="Genomic_DNA"/>
</dbReference>
<dbReference type="SMR" id="L0E2Q1"/>
<dbReference type="GO" id="GO:0051213">
    <property type="term" value="F:dioxygenase activity"/>
    <property type="evidence" value="ECO:0007669"/>
    <property type="project" value="UniProtKB-KW"/>
</dbReference>
<dbReference type="GO" id="GO:0046872">
    <property type="term" value="F:metal ion binding"/>
    <property type="evidence" value="ECO:0007669"/>
    <property type="project" value="UniProtKB-KW"/>
</dbReference>
<dbReference type="GO" id="GO:0009820">
    <property type="term" value="P:alkaloid metabolic process"/>
    <property type="evidence" value="ECO:0007669"/>
    <property type="project" value="UniProtKB-KW"/>
</dbReference>
<dbReference type="GO" id="GO:0044283">
    <property type="term" value="P:small molecule biosynthetic process"/>
    <property type="evidence" value="ECO:0007669"/>
    <property type="project" value="UniProtKB-ARBA"/>
</dbReference>
<dbReference type="Gene3D" id="2.60.120.330">
    <property type="entry name" value="B-lactam Antibiotic, Isopenicillin N Synthase, Chain"/>
    <property type="match status" value="1"/>
</dbReference>
<dbReference type="InterPro" id="IPR026992">
    <property type="entry name" value="DIOX_N"/>
</dbReference>
<dbReference type="InterPro" id="IPR044861">
    <property type="entry name" value="IPNS-like_FE2OG_OXY"/>
</dbReference>
<dbReference type="InterPro" id="IPR027443">
    <property type="entry name" value="IPNS-like_sf"/>
</dbReference>
<dbReference type="InterPro" id="IPR050231">
    <property type="entry name" value="Iron_ascorbate_oxido_reductase"/>
</dbReference>
<dbReference type="InterPro" id="IPR005123">
    <property type="entry name" value="Oxoglu/Fe-dep_dioxygenase_dom"/>
</dbReference>
<dbReference type="PANTHER" id="PTHR47990">
    <property type="entry name" value="2-OXOGLUTARATE (2OG) AND FE(II)-DEPENDENT OXYGENASE SUPERFAMILY PROTEIN-RELATED"/>
    <property type="match status" value="1"/>
</dbReference>
<dbReference type="Pfam" id="PF03171">
    <property type="entry name" value="2OG-FeII_Oxy"/>
    <property type="match status" value="1"/>
</dbReference>
<dbReference type="Pfam" id="PF14226">
    <property type="entry name" value="DIOX_N"/>
    <property type="match status" value="1"/>
</dbReference>
<dbReference type="SUPFAM" id="SSF51197">
    <property type="entry name" value="Clavaminate synthase-like"/>
    <property type="match status" value="1"/>
</dbReference>
<dbReference type="PROSITE" id="PS51471">
    <property type="entry name" value="FE2OG_OXY"/>
    <property type="match status" value="1"/>
</dbReference>
<organism>
    <name type="scientific">Penicillium fellutanum</name>
    <dbReference type="NCBI Taxonomy" id="70095"/>
    <lineage>
        <taxon>Eukaryota</taxon>
        <taxon>Fungi</taxon>
        <taxon>Dikarya</taxon>
        <taxon>Ascomycota</taxon>
        <taxon>Pezizomycotina</taxon>
        <taxon>Eurotiomycetes</taxon>
        <taxon>Eurotiomycetidae</taxon>
        <taxon>Eurotiales</taxon>
        <taxon>Aspergillaceae</taxon>
        <taxon>Penicillium</taxon>
    </lineage>
</organism>
<comment type="function">
    <text evidence="2 3 6">2-oxoglutarate-dependent dioxygenase; part of the gene cluster that mediates the biosynthesis of paraherquamide, a fungal indole alkaloid that belongs to a family of natural products containing a characteristic bicyclo[2.2.2]diazaoctane core (PubMed:23213353). The first steps in the biosynthesis of paraherquamide is the production of the beta-methyl-proline precursor from L-isoleucine (Probable). They require oxidation of a terminally hydroxylated L-isoleucine to the corresponding aldehyde by enzymes which have still to be identified (Probable). Spontaneous cyclization and dehydration would yield the 4-methyl pyrolline-5-carboxylic acid, which is then reduced by the pyrroline-5-carboxylate reductase phqD leading to the beta-methyl-proline precursor (Probable). The next step of paraherquamide biosynthesis involves coupling of beta-methyl-proline and L-tryptophan by the bimodular NRPS phqB, to produce a monooxopiperazine intermediate (Probable). The reductase (R) domain of phqB utilizes NADPH for hydride transfer to reduce the thioester bond of the T domain-tethered linear dipeptide to a hemithioaminal intermediate, which spontaneously cleaves the C-S bond to release the aldehyde product (PubMed:31548667). This compound undergoes spontaneous cyclization and dehydration to give a dienamine which is reverse prenylated at C-2 by the reverse prenyltransferase phqJ (Probable). The other prenyltransferase present in the cluster, phqI may be a redundant gene in the pathway (Probable). During biosynthetic assembly, the key step to produce the polycyclic core is catalyzed by the bifunctional reductase and intramolecular [4+2] Diels-Alderase, phqE, resulting in formation of the [2.2.2] diazaoctane intermediate preparaherquamide (PubMed:31548667). Following formation of preparaherquamide, an indole 2,3-epoxidation-initiated pinacol-like rearrangement is catalyzed by the phqK FAD-dependent monooxygenase (Probable). The prenyltransferase phqA, the cytochrome P450 monooxygenase phqL, and the FAD-linked oxidoreductase phqH (or the cytochrome P450 monooxygenase phqM), are proposed to be involved in the formation of the pyran ring (Probable). The FAD-dependent monooxygenase phqK is likely responsible for generation of the spiro-oxindole, and the N-methylation is likely mediated by the phqN methyltransferase leading to the isolable natural product paraherquamide F (Probable). However, the order of these biosynthetic steps has still to be determined (Probable). In late-stage paraherquamide biosynthesis, the third P450 monooxygenase, phqO, is probably responsible for the C-14 hydroxylation, transforming paraherquamide F to paraherquamide G, and paraherquamide E to the final product paraherquamide A (Probable). The expansion from the 6-membered ring pyran (in paraherquamides F and G) to the 7-membered dioxepin ring (in paraherquamides A and E) represents a poorly understood but intriguing process that probably involves the 2-oxoglutarate-dependent dioxygenase phqC (Probable). Finally, the remaining members of the paraherquamide cluster, including phqI as well as phqM (or phqH), do not have a clearly prescribed role and appear to be redundant (Probable).</text>
</comment>
<comment type="cofactor">
    <cofactor evidence="1">
        <name>Fe(2+)</name>
        <dbReference type="ChEBI" id="CHEBI:29033"/>
    </cofactor>
    <text evidence="1">Binds 1 Fe(2+) ion per subunit.</text>
</comment>
<comment type="pathway">
    <text evidence="6">Alkaloid biosynthesis.</text>
</comment>
<comment type="similarity">
    <text evidence="5">Belongs to the iron/ascorbate-dependent oxidoreductase family.</text>
</comment>
<protein>
    <recommendedName>
        <fullName evidence="4">2-oxoglutarate-dependent dioxygenase phqC</fullName>
        <ecNumber evidence="1">1.14.11.-</ecNumber>
    </recommendedName>
    <alternativeName>
        <fullName evidence="4">Paraherquamide biosynthesis cluster protein C</fullName>
    </alternativeName>
</protein>
<name>PHQC_PENFE</name>
<sequence length="353" mass="39049">MSKTTEVKVVEVQLEDPLPGIVDASRFISGSPTEQRAFAVELVDSVRRCGFVKVINHGLSDELIDELFAWCQSSHVVQNERFFAIDPEQKLAVVNPPGPSPQRGWSCVGAEKASRLFSRGQTSLDLTDARRNQEHFDAGSPSDTKWPSRWPDEAVIPGFKAFLEDFYVRSHQAALLILEALEMGLNLPAGVLKSRCGGCASELRLNNYPEIDIEELRRGKISRIHPHADLGVITCLFQDGLGGLELEHRSHAGSFLPVPPGARSEMVVNISETFQLWTNNVITAGIHQVTVPPEMKTRTEGRISARRSCAFFLKANGDASVAPLPQFVTQERPAAYSEMTALDYHQKRLATAY</sequence>
<reference key="1">
    <citation type="journal article" date="2012" name="Med. Chem. Commun.">
        <title>Comparative analysis of the biosynthetic systems for fungal bicyclo[2.2.2]diazaoctane indole alkaloids: the (+)/(-)-notoamide, paraherquamide and malbrancheamide pathways.</title>
        <authorList>
            <person name="Li S."/>
            <person name="Anand K."/>
            <person name="Tran H."/>
            <person name="Yu F."/>
            <person name="Finefield J.M."/>
            <person name="Sunderhaus J.D."/>
            <person name="McAfoos T.J."/>
            <person name="Tsukamoto S."/>
            <person name="Williams R.M."/>
            <person name="Sherman D.H."/>
        </authorList>
    </citation>
    <scope>NUCLEOTIDE SEQUENCE [GENOMIC DNA]</scope>
    <scope>FUNCTION</scope>
    <scope>PATHWAY</scope>
    <source>
        <strain>ATCC 20841 / MF5123</strain>
    </source>
</reference>
<reference key="2">
    <citation type="journal article" date="2019" name="Nat. Chem.">
        <title>Fungal indole alkaloid biogenesis through evolution of a bifunctional reductase/Diels-Alderase.</title>
        <authorList>
            <person name="Dan Q."/>
            <person name="Newmister S.A."/>
            <person name="Klas K.R."/>
            <person name="Fraley A.E."/>
            <person name="McAfoos T.J."/>
            <person name="Somoza A.D."/>
            <person name="Sunderhaus J.D."/>
            <person name="Ye Y."/>
            <person name="Shende V.V."/>
            <person name="Yu F."/>
            <person name="Sanders J.N."/>
            <person name="Brown W.C."/>
            <person name="Zhao L."/>
            <person name="Paton R.S."/>
            <person name="Houk K.N."/>
            <person name="Smith J.L."/>
            <person name="Sherman D.H."/>
            <person name="Williams R.M."/>
        </authorList>
    </citation>
    <scope>FUNCTION</scope>
</reference>